<comment type="function">
    <text evidence="1">Responsible for the release of ribosomes from messenger RNA at the termination of protein biosynthesis. May increase the efficiency of translation by recycling ribosomes from one round of translation to another.</text>
</comment>
<comment type="subcellular location">
    <subcellularLocation>
        <location evidence="1">Cytoplasm</location>
    </subcellularLocation>
</comment>
<comment type="similarity">
    <text evidence="1">Belongs to the RRF family.</text>
</comment>
<sequence length="185" mass="20650">MIDEINVDARQRMEKSVLALRGQFTKIRTGRAHPSLLDSIMVPYYGAPTPLKQLANVIAEDSRTLALTVFDKSAAQAVEKAIMQSDLGLNPMSAGTVIRIPMPALTEERRKDLIRVVRNEAEGGRVAVRNIRRDANGDIKELLKEKEISEDDAHRGEDAIQKLTDEFVKQIDDILAAKETELMEV</sequence>
<feature type="chain" id="PRO_1000003229" description="Ribosome-recycling factor">
    <location>
        <begin position="1"/>
        <end position="185"/>
    </location>
</feature>
<gene>
    <name evidence="1" type="primary">frr</name>
    <name type="ordered locus">Patl_1252</name>
</gene>
<organism>
    <name type="scientific">Pseudoalteromonas atlantica (strain T6c / ATCC BAA-1087)</name>
    <dbReference type="NCBI Taxonomy" id="3042615"/>
    <lineage>
        <taxon>Bacteria</taxon>
        <taxon>Pseudomonadati</taxon>
        <taxon>Pseudomonadota</taxon>
        <taxon>Gammaproteobacteria</taxon>
        <taxon>Alteromonadales</taxon>
        <taxon>Alteromonadaceae</taxon>
        <taxon>Paraglaciecola</taxon>
    </lineage>
</organism>
<dbReference type="EMBL" id="CP000388">
    <property type="protein sequence ID" value="ABG39778.1"/>
    <property type="molecule type" value="Genomic_DNA"/>
</dbReference>
<dbReference type="RefSeq" id="WP_006992108.1">
    <property type="nucleotide sequence ID" value="NC_008228.1"/>
</dbReference>
<dbReference type="SMR" id="Q15WG0"/>
<dbReference type="STRING" id="342610.Patl_1252"/>
<dbReference type="KEGG" id="pat:Patl_1252"/>
<dbReference type="eggNOG" id="COG0233">
    <property type="taxonomic scope" value="Bacteria"/>
</dbReference>
<dbReference type="HOGENOM" id="CLU_073981_2_1_6"/>
<dbReference type="OrthoDB" id="9804006at2"/>
<dbReference type="Proteomes" id="UP000001981">
    <property type="component" value="Chromosome"/>
</dbReference>
<dbReference type="GO" id="GO:0005829">
    <property type="term" value="C:cytosol"/>
    <property type="evidence" value="ECO:0007669"/>
    <property type="project" value="GOC"/>
</dbReference>
<dbReference type="GO" id="GO:0043023">
    <property type="term" value="F:ribosomal large subunit binding"/>
    <property type="evidence" value="ECO:0007669"/>
    <property type="project" value="TreeGrafter"/>
</dbReference>
<dbReference type="GO" id="GO:0002184">
    <property type="term" value="P:cytoplasmic translational termination"/>
    <property type="evidence" value="ECO:0007669"/>
    <property type="project" value="TreeGrafter"/>
</dbReference>
<dbReference type="CDD" id="cd00520">
    <property type="entry name" value="RRF"/>
    <property type="match status" value="1"/>
</dbReference>
<dbReference type="FunFam" id="1.10.132.20:FF:000001">
    <property type="entry name" value="Ribosome-recycling factor"/>
    <property type="match status" value="1"/>
</dbReference>
<dbReference type="FunFam" id="3.30.1360.40:FF:000001">
    <property type="entry name" value="Ribosome-recycling factor"/>
    <property type="match status" value="1"/>
</dbReference>
<dbReference type="Gene3D" id="3.30.1360.40">
    <property type="match status" value="1"/>
</dbReference>
<dbReference type="Gene3D" id="1.10.132.20">
    <property type="entry name" value="Ribosome-recycling factor"/>
    <property type="match status" value="1"/>
</dbReference>
<dbReference type="HAMAP" id="MF_00040">
    <property type="entry name" value="RRF"/>
    <property type="match status" value="1"/>
</dbReference>
<dbReference type="InterPro" id="IPR002661">
    <property type="entry name" value="Ribosome_recyc_fac"/>
</dbReference>
<dbReference type="InterPro" id="IPR023584">
    <property type="entry name" value="Ribosome_recyc_fac_dom"/>
</dbReference>
<dbReference type="InterPro" id="IPR036191">
    <property type="entry name" value="RRF_sf"/>
</dbReference>
<dbReference type="NCBIfam" id="TIGR00496">
    <property type="entry name" value="frr"/>
    <property type="match status" value="1"/>
</dbReference>
<dbReference type="PANTHER" id="PTHR20982:SF3">
    <property type="entry name" value="MITOCHONDRIAL RIBOSOME RECYCLING FACTOR PSEUDO 1"/>
    <property type="match status" value="1"/>
</dbReference>
<dbReference type="PANTHER" id="PTHR20982">
    <property type="entry name" value="RIBOSOME RECYCLING FACTOR"/>
    <property type="match status" value="1"/>
</dbReference>
<dbReference type="Pfam" id="PF01765">
    <property type="entry name" value="RRF"/>
    <property type="match status" value="1"/>
</dbReference>
<dbReference type="SUPFAM" id="SSF55194">
    <property type="entry name" value="Ribosome recycling factor, RRF"/>
    <property type="match status" value="1"/>
</dbReference>
<evidence type="ECO:0000255" key="1">
    <source>
        <dbReference type="HAMAP-Rule" id="MF_00040"/>
    </source>
</evidence>
<reference key="1">
    <citation type="submission" date="2006-06" db="EMBL/GenBank/DDBJ databases">
        <title>Complete sequence of Pseudoalteromonas atlantica T6c.</title>
        <authorList>
            <consortium name="US DOE Joint Genome Institute"/>
            <person name="Copeland A."/>
            <person name="Lucas S."/>
            <person name="Lapidus A."/>
            <person name="Barry K."/>
            <person name="Detter J.C."/>
            <person name="Glavina del Rio T."/>
            <person name="Hammon N."/>
            <person name="Israni S."/>
            <person name="Dalin E."/>
            <person name="Tice H."/>
            <person name="Pitluck S."/>
            <person name="Saunders E."/>
            <person name="Brettin T."/>
            <person name="Bruce D."/>
            <person name="Han C."/>
            <person name="Tapia R."/>
            <person name="Gilna P."/>
            <person name="Schmutz J."/>
            <person name="Larimer F."/>
            <person name="Land M."/>
            <person name="Hauser L."/>
            <person name="Kyrpides N."/>
            <person name="Kim E."/>
            <person name="Karls A.C."/>
            <person name="Bartlett D."/>
            <person name="Higgins B.P."/>
            <person name="Richardson P."/>
        </authorList>
    </citation>
    <scope>NUCLEOTIDE SEQUENCE [LARGE SCALE GENOMIC DNA]</scope>
    <source>
        <strain>T6c / ATCC BAA-1087</strain>
    </source>
</reference>
<proteinExistence type="inferred from homology"/>
<protein>
    <recommendedName>
        <fullName evidence="1">Ribosome-recycling factor</fullName>
        <shortName evidence="1">RRF</shortName>
    </recommendedName>
    <alternativeName>
        <fullName evidence="1">Ribosome-releasing factor</fullName>
    </alternativeName>
</protein>
<keyword id="KW-0963">Cytoplasm</keyword>
<keyword id="KW-0648">Protein biosynthesis</keyword>
<name>RRF_PSEA6</name>
<accession>Q15WG0</accession>